<proteinExistence type="evidence at protein level"/>
<reference key="1">
    <citation type="journal article" date="2003" name="Nature">
        <title>The DNA sequence of human chromosome 7.</title>
        <authorList>
            <person name="Hillier L.W."/>
            <person name="Fulton R.S."/>
            <person name="Fulton L.A."/>
            <person name="Graves T.A."/>
            <person name="Pepin K.H."/>
            <person name="Wagner-McPherson C."/>
            <person name="Layman D."/>
            <person name="Maas J."/>
            <person name="Jaeger S."/>
            <person name="Walker R."/>
            <person name="Wylie K."/>
            <person name="Sekhon M."/>
            <person name="Becker M.C."/>
            <person name="O'Laughlin M.D."/>
            <person name="Schaller M.E."/>
            <person name="Fewell G.A."/>
            <person name="Delehaunty K.D."/>
            <person name="Miner T.L."/>
            <person name="Nash W.E."/>
            <person name="Cordes M."/>
            <person name="Du H."/>
            <person name="Sun H."/>
            <person name="Edwards J."/>
            <person name="Bradshaw-Cordum H."/>
            <person name="Ali J."/>
            <person name="Andrews S."/>
            <person name="Isak A."/>
            <person name="Vanbrunt A."/>
            <person name="Nguyen C."/>
            <person name="Du F."/>
            <person name="Lamar B."/>
            <person name="Courtney L."/>
            <person name="Kalicki J."/>
            <person name="Ozersky P."/>
            <person name="Bielicki L."/>
            <person name="Scott K."/>
            <person name="Holmes A."/>
            <person name="Harkins R."/>
            <person name="Harris A."/>
            <person name="Strong C.M."/>
            <person name="Hou S."/>
            <person name="Tomlinson C."/>
            <person name="Dauphin-Kohlberg S."/>
            <person name="Kozlowicz-Reilly A."/>
            <person name="Leonard S."/>
            <person name="Rohlfing T."/>
            <person name="Rock S.M."/>
            <person name="Tin-Wollam A.-M."/>
            <person name="Abbott A."/>
            <person name="Minx P."/>
            <person name="Maupin R."/>
            <person name="Strowmatt C."/>
            <person name="Latreille P."/>
            <person name="Miller N."/>
            <person name="Johnson D."/>
            <person name="Murray J."/>
            <person name="Woessner J.P."/>
            <person name="Wendl M.C."/>
            <person name="Yang S.-P."/>
            <person name="Schultz B.R."/>
            <person name="Wallis J.W."/>
            <person name="Spieth J."/>
            <person name="Bieri T.A."/>
            <person name="Nelson J.O."/>
            <person name="Berkowicz N."/>
            <person name="Wohldmann P.E."/>
            <person name="Cook L.L."/>
            <person name="Hickenbotham M.T."/>
            <person name="Eldred J."/>
            <person name="Williams D."/>
            <person name="Bedell J.A."/>
            <person name="Mardis E.R."/>
            <person name="Clifton S.W."/>
            <person name="Chissoe S.L."/>
            <person name="Marra M.A."/>
            <person name="Raymond C."/>
            <person name="Haugen E."/>
            <person name="Gillett W."/>
            <person name="Zhou Y."/>
            <person name="James R."/>
            <person name="Phelps K."/>
            <person name="Iadanoto S."/>
            <person name="Bubb K."/>
            <person name="Simms E."/>
            <person name="Levy R."/>
            <person name="Clendenning J."/>
            <person name="Kaul R."/>
            <person name="Kent W.J."/>
            <person name="Furey T.S."/>
            <person name="Baertsch R.A."/>
            <person name="Brent M.R."/>
            <person name="Keibler E."/>
            <person name="Flicek P."/>
            <person name="Bork P."/>
            <person name="Suyama M."/>
            <person name="Bailey J.A."/>
            <person name="Portnoy M.E."/>
            <person name="Torrents D."/>
            <person name="Chinwalla A.T."/>
            <person name="Gish W.R."/>
            <person name="Eddy S.R."/>
            <person name="McPherson J.D."/>
            <person name="Olson M.V."/>
            <person name="Eichler E.E."/>
            <person name="Green E.D."/>
            <person name="Waterston R.H."/>
            <person name="Wilson R.K."/>
        </authorList>
    </citation>
    <scope>NUCLEOTIDE SEQUENCE [LARGE SCALE GENOMIC DNA] (IMGT ALLELE TRGV8*01)</scope>
</reference>
<reference key="2">
    <citation type="book" date="2001" name="The T Cell Receptor FactsBook.">
        <title>The T Cell Receptor FactsBook.</title>
        <editorList>
            <person name="Lefranc M.P."/>
            <person name="Lefranc G."/>
        </editorList>
        <authorList>
            <person name="Lefranc M.P."/>
            <person name="Lefranc G."/>
        </authorList>
    </citation>
    <scope>NOMENCLATURE</scope>
</reference>
<reference key="3">
    <citation type="journal article" date="2013" name="Nat. Rev. Immunol.">
        <title>Six-of-the-best: unique contributions of gammadelta T cells to immunology.</title>
        <authorList>
            <person name="Vantourout P."/>
            <person name="Hayday A."/>
        </authorList>
    </citation>
    <scope>REVIEW ON FUNCTION AND ANTIGEN RECOGNITION</scope>
</reference>
<reference key="4">
    <citation type="journal article" date="2014" name="Annu. Rev. Immunol.">
        <title>gammadelta T cells: first line of defense and beyond.</title>
        <authorList>
            <person name="Chien Y.H."/>
            <person name="Meyer C."/>
            <person name="Bonneville M."/>
        </authorList>
    </citation>
    <scope>REVIEW ON GAMMA DELTA T CELL RECEPTOR DIVERSITY</scope>
</reference>
<reference key="5">
    <citation type="journal article" date="2014" name="Front. Immunol.">
        <title>Immunoglobulin and T Cell Receptor Genes: IMGT((R)) and the Birth and Rise of Immunoinformatics.</title>
        <authorList>
            <person name="Lefranc M.P."/>
        </authorList>
    </citation>
    <scope>NOMENCLATURE</scope>
</reference>
<reference key="6">
    <citation type="journal article" date="2015" name="Front. Immunol.">
        <title>Five Layers of Receptor Signaling in gammadelta T-Cell Differentiation and Activation.</title>
        <authorList>
            <person name="Ribeiro S.T."/>
            <person name="Ribot J.C."/>
            <person name="Silva-Santos B."/>
        </authorList>
    </citation>
    <scope>REVIEW ON T CELL RECEPTOR SIGNALING</scope>
    <scope>SUBUNIT</scope>
</reference>
<reference key="7">
    <citation type="journal article" date="2017" name="Nat. Rev. Immunol.">
        <title>gammadelta T cells in homeostasis and host defence of epithelial barrier tissues.</title>
        <authorList>
            <person name="Nielsen M.M."/>
            <person name="Witherden D.A."/>
            <person name="Havran W.L."/>
        </authorList>
    </citation>
    <scope>REVIEW ON FUNCTION</scope>
</reference>
<name>TRGV8_HUMAN</name>
<gene>
    <name evidence="8" type="primary">TRGV8</name>
    <name evidence="10" type="synonym">TCRGV8</name>
</gene>
<protein>
    <recommendedName>
        <fullName evidence="8">T cell receptor gamma variable 8</fullName>
    </recommendedName>
</protein>
<sequence length="118" mass="13335">MLLALALLLAFLPPASQKSSNLEGRTKSVTRPTGSSAVITCDLPVENAVYTHWYLHQEGKAPQRLLYYDSYNSRVVLESGISREKYHTYASTGKSLKFILENLIERDSGVYYCATWDR</sequence>
<accession>A0A0C4DH27</accession>
<dbReference type="EMBL" id="AC006033">
    <property type="status" value="NOT_ANNOTATED_CDS"/>
    <property type="molecule type" value="Genomic_DNA"/>
</dbReference>
<dbReference type="PDB" id="7LLI">
    <property type="method" value="X-ray"/>
    <property type="resolution" value="3.20 A"/>
    <property type="chains" value="E/K=19-117"/>
</dbReference>
<dbReference type="PDBsum" id="7LLI"/>
<dbReference type="SMR" id="A0A0C4DH27"/>
<dbReference type="FunCoup" id="A0A0C4DH27">
    <property type="interactions" value="303"/>
</dbReference>
<dbReference type="IMGT_GENE-DB" id="TRGV8"/>
<dbReference type="BioMuta" id="TRGV8"/>
<dbReference type="Ensembl" id="ENST00000390343.2">
    <property type="protein sequence ID" value="ENSP00000374866.2"/>
    <property type="gene ID" value="ENSG00000211696.2"/>
</dbReference>
<dbReference type="AGR" id="HGNC:12294"/>
<dbReference type="GeneCards" id="TRGV8"/>
<dbReference type="HGNC" id="HGNC:12294">
    <property type="gene designation" value="TRGV8"/>
</dbReference>
<dbReference type="HPA" id="ENSG00000211696">
    <property type="expression patterns" value="Tissue enhanced (lymphoid tissue, prostate)"/>
</dbReference>
<dbReference type="neXtProt" id="NX_A0A0C4DH27"/>
<dbReference type="VEuPathDB" id="HostDB:ENSG00000211696"/>
<dbReference type="GeneTree" id="ENSGT00940000153143"/>
<dbReference type="HOGENOM" id="CLU_077975_7_1_1"/>
<dbReference type="InParanoid" id="A0A0C4DH27"/>
<dbReference type="OMA" id="SARIHCE"/>
<dbReference type="OrthoDB" id="9628507at2759"/>
<dbReference type="PAN-GO" id="A0A0C4DH27">
    <property type="GO annotations" value="1 GO annotation based on evolutionary models"/>
</dbReference>
<dbReference type="PhylomeDB" id="A0A0C4DH27"/>
<dbReference type="SignaLink" id="A0A0C4DH27"/>
<dbReference type="PRO" id="PR:A0A0C4DH27"/>
<dbReference type="Proteomes" id="UP000005640">
    <property type="component" value="Chromosome 7"/>
</dbReference>
<dbReference type="RNAct" id="A0A0C4DH27">
    <property type="molecule type" value="protein"/>
</dbReference>
<dbReference type="Bgee" id="ENSG00000211696">
    <property type="expression patterns" value="Expressed in male germ line stem cell (sensu Vertebrata) in testis and 80 other cell types or tissues"/>
</dbReference>
<dbReference type="GO" id="GO:0009897">
    <property type="term" value="C:external side of plasma membrane"/>
    <property type="evidence" value="ECO:0000318"/>
    <property type="project" value="GO_Central"/>
</dbReference>
<dbReference type="GO" id="GO:0042101">
    <property type="term" value="C:T cell receptor complex"/>
    <property type="evidence" value="ECO:0007669"/>
    <property type="project" value="UniProtKB-KW"/>
</dbReference>
<dbReference type="GO" id="GO:0002250">
    <property type="term" value="P:adaptive immune response"/>
    <property type="evidence" value="ECO:0007669"/>
    <property type="project" value="UniProtKB-KW"/>
</dbReference>
<dbReference type="GO" id="GO:0045087">
    <property type="term" value="P:innate immune response"/>
    <property type="evidence" value="ECO:0007669"/>
    <property type="project" value="UniProtKB-KW"/>
</dbReference>
<dbReference type="FunFam" id="2.60.40.10:FF:001866">
    <property type="entry name" value="T cell receptor gamma variable 3"/>
    <property type="match status" value="1"/>
</dbReference>
<dbReference type="Gene3D" id="2.60.40.10">
    <property type="entry name" value="Immunoglobulins"/>
    <property type="match status" value="1"/>
</dbReference>
<dbReference type="InterPro" id="IPR007110">
    <property type="entry name" value="Ig-like_dom"/>
</dbReference>
<dbReference type="InterPro" id="IPR036179">
    <property type="entry name" value="Ig-like_dom_sf"/>
</dbReference>
<dbReference type="InterPro" id="IPR013783">
    <property type="entry name" value="Ig-like_fold"/>
</dbReference>
<dbReference type="InterPro" id="IPR013106">
    <property type="entry name" value="Ig_V-set"/>
</dbReference>
<dbReference type="InterPro" id="IPR051117">
    <property type="entry name" value="TRG_var/const_region"/>
</dbReference>
<dbReference type="PANTHER" id="PTHR19256:SF54">
    <property type="entry name" value="T CELL RECEPTOR GAMMA VARIABLE 8"/>
    <property type="match status" value="1"/>
</dbReference>
<dbReference type="PANTHER" id="PTHR19256">
    <property type="entry name" value="T-CELL RECEPTOR GAMMA CHAIN"/>
    <property type="match status" value="1"/>
</dbReference>
<dbReference type="Pfam" id="PF07686">
    <property type="entry name" value="V-set"/>
    <property type="match status" value="1"/>
</dbReference>
<dbReference type="SUPFAM" id="SSF48726">
    <property type="entry name" value="Immunoglobulin"/>
    <property type="match status" value="1"/>
</dbReference>
<dbReference type="PROSITE" id="PS50835">
    <property type="entry name" value="IG_LIKE"/>
    <property type="match status" value="1"/>
</dbReference>
<keyword id="KW-0002">3D-structure</keyword>
<keyword id="KW-1064">Adaptive immunity</keyword>
<keyword id="KW-1003">Cell membrane</keyword>
<keyword id="KW-1015">Disulfide bond</keyword>
<keyword id="KW-0391">Immunity</keyword>
<keyword id="KW-0393">Immunoglobulin domain</keyword>
<keyword id="KW-0399">Innate immunity</keyword>
<keyword id="KW-0472">Membrane</keyword>
<keyword id="KW-0675">Receptor</keyword>
<keyword id="KW-1185">Reference proteome</keyword>
<keyword id="KW-0732">Signal</keyword>
<keyword id="KW-1279">T cell receptor</keyword>
<comment type="function">
    <text evidence="3 4 5 6 7">V region of the variable domain of T cell receptor (TR) gamma chain that participates in the antigen recognition (PubMed:24600447). Gamma-delta TRs recognize a variety of self and foreign non-peptide antigens frequently expressed at the epithelial boundaries between the host and external environment, including endogenous lipids presented by MH-like protein CD1D and phosphoantigens presented by butyrophilin-like molecule BTN3A1. Upon antigen recognition induces rapid, innate-like immune responses involved in pathogen clearance and tissue repair (PubMed:23348415, PubMed:28920588). Binding of gamma-delta TR complex to antigen triggers phosphorylation of immunoreceptor tyrosine-based activation motifs (ITAMs) in the CD3 chains by the LCK and FYN kinases, allowing the recruitment, phosphorylation, and activation of ZAP70 that facilitates phosphorylation of the scaffolding proteins LCP2 and LAT. This lead to the formation of a supramolecular signalosome that recruits the phospholipase PLCG1, resulting in calcium mobilization and ERK activation, ultimately leading to T cell expansion and differentiation into effector cells (PubMed:25674089). Gamma-delta TRs are produced through somatic rearrangement of a limited repertoire of variable (V), diversity (D), and joining (J) genes. The potential diversity of gamma-delta TRs is conferred by the unique ability to rearrange (D) genes in tandem and to utilize all three reading frames. The combinatorial diversity is considerably increased by the sequence exonuclease trimming and random nucleotide (N) region additions which occur during the V-(D)-J rearrangements (PubMed:24387714).</text>
</comment>
<comment type="subunit">
    <text evidence="6">Gamma-delta TR is a heterodimer composed of a gamma and delta chain; disulfide-linked. The gamma-delta TR is associated with the transmembrane signaling CD3 coreceptor proteins following the stoichiometry: a single gamma-delta TR heterodimer associates with one CD3D-CD3E heterodimer, one CD3G-CD3E heterodimer and one CD247 homodimer forming a stable octameric structure. Upon activation, gamma-delta TR complex associates with FCER1G to initiate intracellular signaling.</text>
</comment>
<comment type="subcellular location">
    <subcellularLocation>
        <location evidence="9">Cell membrane</location>
    </subcellularLocation>
</comment>
<comment type="polymorphism">
    <text evidence="9">There are several alleles. The sequence shown is that of IMGT allele TRGV8*01.</text>
</comment>
<organism>
    <name type="scientific">Homo sapiens</name>
    <name type="common">Human</name>
    <dbReference type="NCBI Taxonomy" id="9606"/>
    <lineage>
        <taxon>Eukaryota</taxon>
        <taxon>Metazoa</taxon>
        <taxon>Chordata</taxon>
        <taxon>Craniata</taxon>
        <taxon>Vertebrata</taxon>
        <taxon>Euteleostomi</taxon>
        <taxon>Mammalia</taxon>
        <taxon>Eutheria</taxon>
        <taxon>Euarchontoglires</taxon>
        <taxon>Primates</taxon>
        <taxon>Haplorrhini</taxon>
        <taxon>Catarrhini</taxon>
        <taxon>Hominidae</taxon>
        <taxon>Homo</taxon>
    </lineage>
</organism>
<evidence type="ECO:0000255" key="1"/>
<evidence type="ECO:0000255" key="2">
    <source>
        <dbReference type="PROSITE-ProRule" id="PRU00114"/>
    </source>
</evidence>
<evidence type="ECO:0000303" key="3">
    <source>
    </source>
</evidence>
<evidence type="ECO:0000303" key="4">
    <source>
    </source>
</evidence>
<evidence type="ECO:0000303" key="5">
    <source>
    </source>
</evidence>
<evidence type="ECO:0000303" key="6">
    <source>
    </source>
</evidence>
<evidence type="ECO:0000303" key="7">
    <source>
    </source>
</evidence>
<evidence type="ECO:0000303" key="8">
    <source ref="2"/>
</evidence>
<evidence type="ECO:0000305" key="9"/>
<evidence type="ECO:0000312" key="10">
    <source>
        <dbReference type="HGNC" id="HGNC:12294"/>
    </source>
</evidence>
<evidence type="ECO:0007829" key="11">
    <source>
        <dbReference type="PDB" id="7LLI"/>
    </source>
</evidence>
<feature type="signal peptide" evidence="1">
    <location>
        <begin position="1"/>
        <end position="17"/>
    </location>
</feature>
<feature type="chain" id="PRO_0000446168" description="T cell receptor gamma variable 8" evidence="1">
    <location>
        <begin position="18"/>
        <end position="118"/>
    </location>
</feature>
<feature type="domain" description="Ig-like" evidence="2">
    <location>
        <begin position="18"/>
        <end position="118" status="greater than"/>
    </location>
</feature>
<feature type="disulfide bond" evidence="2">
    <location>
        <begin position="41"/>
        <end position="113"/>
    </location>
</feature>
<feature type="non-terminal residue">
    <location>
        <position position="118"/>
    </location>
</feature>
<feature type="strand" evidence="11">
    <location>
        <begin position="27"/>
        <end position="32"/>
    </location>
</feature>
<feature type="strand" evidence="11">
    <location>
        <begin position="37"/>
        <end position="40"/>
    </location>
</feature>
<feature type="strand" evidence="11">
    <location>
        <begin position="44"/>
        <end position="46"/>
    </location>
</feature>
<feature type="strand" evidence="11">
    <location>
        <begin position="49"/>
        <end position="56"/>
    </location>
</feature>
<feature type="strand" evidence="11">
    <location>
        <begin position="58"/>
        <end position="60"/>
    </location>
</feature>
<feature type="strand" evidence="11">
    <location>
        <begin position="63"/>
        <end position="69"/>
    </location>
</feature>
<feature type="turn" evidence="11">
    <location>
        <begin position="70"/>
        <end position="73"/>
    </location>
</feature>
<feature type="strand" evidence="11">
    <location>
        <begin position="74"/>
        <end position="77"/>
    </location>
</feature>
<feature type="strand" evidence="11">
    <location>
        <begin position="85"/>
        <end position="88"/>
    </location>
</feature>
<feature type="strand" evidence="11">
    <location>
        <begin position="97"/>
        <end position="100"/>
    </location>
</feature>
<feature type="helix" evidence="11">
    <location>
        <begin position="105"/>
        <end position="107"/>
    </location>
</feature>
<feature type="strand" evidence="11">
    <location>
        <begin position="109"/>
        <end position="117"/>
    </location>
</feature>